<proteinExistence type="evidence at protein level"/>
<comment type="function">
    <molecule>CAPA-trypto-pyrokinin</molecule>
    <text evidence="1">Myoactive.</text>
</comment>
<comment type="subcellular location">
    <subcellularLocation>
        <location evidence="6">Secreted</location>
    </subcellularLocation>
</comment>
<comment type="tissue specificity">
    <text evidence="4">CAPA-periviscerokinin 1: Expressed in corpora cardiaca (CC), corpora allata (CA), antennal lobe (AL) and gnathal ganglion (GNG) (at protein level). Expression detected in most animals in CC and CA and in some animals in AL and GNG (at protein level). CAPA-periviscerokinin 2: Expressed in corpora cardiaca (CC), corpora allata (CA), antennal lobe (AL) and gnathal ganglion (GNG) (at protein level). For non-pyroglutamate form, expression in AL detected in all animals, in CC, CA and GNG in most animals (at protein level). For pyroglutamate form, expression in CC and CA detected in most animals, in AL and GNG in some animals (at protein level). CAPA-periviscerokinin 3: Expressed in corpora cardiaca (CC), corpora allata (CA), antennal lobe (AL) and gnathal ganglion (GNG). Expression detected in most animals in CC and CA and in some animals in AL and GNG (at protein level). CAPA-precursor-related peptide 3: Expressed in corpora cardiaca (CC), corpora allata (CA), antennal lobe (AL) and gnathal ganglion (GNG) (at protein level). Expression in CC and CA detected in some animals, expression in Al and GNG detected in few animals (at protein level). CAPA-trypto-pyrokinin: Expressed in corpora cardiaca (CC), corpora allata (CA), antennal lobe (AL) and gnathal ganglion (GNG) (at protein level). Expression in CC, CA and GNG detected in most animals, in AL in some animals (at protein level).</text>
</comment>
<comment type="mass spectrometry">
    <molecule>CAPA-periviscerokinin 1</molecule>
    <text>Periviscerokinin 1.</text>
</comment>
<comment type="mass spectrometry">
    <molecule>CAPA-periviscerokinin 2</molecule>
    <text>Periviscerokinin 2.</text>
</comment>
<comment type="mass spectrometry">
    <molecule>CAPA-periviscerokinin 2</molecule>
    <text>Pyroglutamate-modified periviscerokinin 2.</text>
</comment>
<comment type="mass spectrometry">
    <molecule>CAPA-periviscerokinin 3</molecule>
    <text>Periviscerokinin 3.</text>
</comment>
<comment type="mass spectrometry">
    <molecule>CAPA-precursor-related peptide 3</molecule>
    <text>CAPA-PP 3.</text>
</comment>
<comment type="mass spectrometry">
    <molecule>CAPA-trypto-pyrokinin</molecule>
    <text>Pyrokinin.</text>
</comment>
<comment type="similarity">
    <text evidence="2">Belongs to the pyrokinin family.</text>
</comment>
<comment type="caution">
    <text evidence="6">Further mature peptides might exist.</text>
</comment>
<dbReference type="GO" id="GO:0005576">
    <property type="term" value="C:extracellular region"/>
    <property type="evidence" value="ECO:0007669"/>
    <property type="project" value="UniProtKB-SubCell"/>
</dbReference>
<dbReference type="GO" id="GO:0005184">
    <property type="term" value="F:neuropeptide hormone activity"/>
    <property type="evidence" value="ECO:0007669"/>
    <property type="project" value="InterPro"/>
</dbReference>
<dbReference type="GO" id="GO:0007218">
    <property type="term" value="P:neuropeptide signaling pathway"/>
    <property type="evidence" value="ECO:0007669"/>
    <property type="project" value="UniProtKB-KW"/>
</dbReference>
<dbReference type="InterPro" id="IPR001484">
    <property type="entry name" value="Pyrokinin_CS"/>
</dbReference>
<dbReference type="PROSITE" id="PS00539">
    <property type="entry name" value="PYROKININ"/>
    <property type="match status" value="1"/>
</dbReference>
<reference evidence="6" key="1">
    <citation type="journal article" date="2018" name="J. Proteome Res.">
        <title>Mating-induced differential peptidomics of neuropeptides and protein hormones in Agrotis ipsilon moths.</title>
        <authorList>
            <person name="Diesner M."/>
            <person name="Gallot A."/>
            <person name="Binz H."/>
            <person name="Gaertner C."/>
            <person name="Vitecek S."/>
            <person name="Kahnt J."/>
            <person name="Schachtner J."/>
            <person name="Jacquin-Joly E."/>
            <person name="Gadenne C."/>
        </authorList>
    </citation>
    <scope>NUCLEOTIDE SEQUENCE [MRNA]</scope>
    <scope>PROTEIN SEQUENCE OF 31-42; 69-76; 79-85; 88-103 AND 106-117</scope>
    <scope>TISSUE SPECIFICITY</scope>
    <scope>MASS SPECTROMETRY</scope>
    <scope>IDENTIFICATION BY MASS SPECTROMETRY</scope>
    <scope>AMIDATION AT VAL-42; VAL-76; LEU-85 AND LEU-117</scope>
    <scope>PYROGLUTAMATE FORMATION AT GLN-69</scope>
</reference>
<evidence type="ECO:0000250" key="1">
    <source>
        <dbReference type="UniProtKB" id="P82693"/>
    </source>
</evidence>
<evidence type="ECO:0000255" key="2"/>
<evidence type="ECO:0000256" key="3">
    <source>
        <dbReference type="SAM" id="MobiDB-lite"/>
    </source>
</evidence>
<evidence type="ECO:0000269" key="4">
    <source>
    </source>
</evidence>
<evidence type="ECO:0000303" key="5">
    <source>
    </source>
</evidence>
<evidence type="ECO:0000305" key="6"/>
<evidence type="ECO:0000305" key="7">
    <source>
    </source>
</evidence>
<sequence>MQPTMRIIVSMALLAYAVASAYHSNVKLRRDGKMVLYPFPRVGRASGNTWQLPLNDLYPEYEPAQVKRQLYAFPRVGRDPVMSRLGRSDLSRVESHEFQPMAVRRTESPGMWFGPRLGRAFKNDDDEITIQNESNDHSEPEQTELIHEDRRKRQTLN</sequence>
<accession>C0HKS6</accession>
<accession>C0HKS7</accession>
<accession>C0HKS8</accession>
<accession>C0HKS9</accession>
<accession>C0HKT0</accession>
<name>CAPA_AGRIP</name>
<feature type="signal peptide" evidence="2">
    <location>
        <begin position="1"/>
        <end position="21"/>
    </location>
</feature>
<feature type="propeptide" id="PRO_0000444214" evidence="6">
    <location>
        <begin position="22"/>
        <end position="28"/>
    </location>
</feature>
<feature type="peptide" id="PRO_0000444215" description="CAPA-periviscerokinin 1" evidence="4">
    <location>
        <begin position="31"/>
        <end position="42"/>
    </location>
</feature>
<feature type="propeptide" id="PRO_0000444216" evidence="6">
    <location>
        <begin position="45"/>
        <end position="66"/>
    </location>
</feature>
<feature type="peptide" id="PRO_0000444217" description="CAPA-periviscerokinin 2" evidence="4">
    <location>
        <begin position="69"/>
        <end position="76"/>
    </location>
</feature>
<feature type="peptide" id="PRO_0000444218" description="CAPA-periviscerokinin 3" evidence="5">
    <location>
        <begin position="79"/>
        <end position="85"/>
    </location>
</feature>
<feature type="peptide" id="PRO_0000444219" description="CAPA-precursor-related peptide 3" evidence="4">
    <location>
        <begin position="88"/>
        <end position="103"/>
    </location>
</feature>
<feature type="peptide" id="PRO_0000444220" description="CAPA-trypto-pyrokinin" evidence="4">
    <location>
        <begin position="106"/>
        <end position="117"/>
    </location>
</feature>
<feature type="propeptide" id="PRO_0000444221" evidence="6">
    <location>
        <begin position="120"/>
        <end position="157"/>
    </location>
</feature>
<feature type="region of interest" description="Disordered" evidence="3">
    <location>
        <begin position="131"/>
        <end position="157"/>
    </location>
</feature>
<feature type="compositionally biased region" description="Basic and acidic residues" evidence="3">
    <location>
        <begin position="134"/>
        <end position="151"/>
    </location>
</feature>
<feature type="modified residue" description="Valine amide" evidence="4">
    <location>
        <position position="42"/>
    </location>
</feature>
<feature type="modified residue" description="Pyrrolidone carboxylic acid; partial" evidence="4">
    <location>
        <position position="69"/>
    </location>
</feature>
<feature type="modified residue" description="Valine amide" evidence="4">
    <location>
        <position position="76"/>
    </location>
</feature>
<feature type="modified residue" description="Leucine amide" evidence="4">
    <location>
        <position position="85"/>
    </location>
</feature>
<feature type="modified residue" description="Leucine amide" evidence="4">
    <location>
        <position position="117"/>
    </location>
</feature>
<organism>
    <name type="scientific">Agrotis ipsilon</name>
    <name type="common">Black cutworm moth</name>
    <dbReference type="NCBI Taxonomy" id="56364"/>
    <lineage>
        <taxon>Eukaryota</taxon>
        <taxon>Metazoa</taxon>
        <taxon>Ecdysozoa</taxon>
        <taxon>Arthropoda</taxon>
        <taxon>Hexapoda</taxon>
        <taxon>Insecta</taxon>
        <taxon>Pterygota</taxon>
        <taxon>Neoptera</taxon>
        <taxon>Endopterygota</taxon>
        <taxon>Lepidoptera</taxon>
        <taxon>Glossata</taxon>
        <taxon>Ditrysia</taxon>
        <taxon>Noctuoidea</taxon>
        <taxon>Noctuidae</taxon>
        <taxon>Noctuinae</taxon>
        <taxon>Noctuini</taxon>
        <taxon>Agrotis</taxon>
    </lineage>
</organism>
<keyword id="KW-0027">Amidation</keyword>
<keyword id="KW-0165">Cleavage on pair of basic residues</keyword>
<keyword id="KW-0903">Direct protein sequencing</keyword>
<keyword id="KW-0527">Neuropeptide</keyword>
<keyword id="KW-0873">Pyrrolidone carboxylic acid</keyword>
<keyword id="KW-0964">Secreted</keyword>
<keyword id="KW-0732">Signal</keyword>
<protein>
    <recommendedName>
        <fullName evidence="6">CAPA peptides</fullName>
    </recommendedName>
    <component>
        <recommendedName>
            <fullName evidence="7">CAPA-periviscerokinin 1</fullName>
            <shortName evidence="5">CAPA-PVK-1</shortName>
        </recommendedName>
    </component>
    <component>
        <recommendedName>
            <fullName evidence="7">CAPA-periviscerokinin 2</fullName>
            <shortName evidence="5">CAPA-PVK-2</shortName>
        </recommendedName>
    </component>
    <component>
        <recommendedName>
            <fullName evidence="7">CAPA-periviscerokinin 3</fullName>
            <shortName evidence="5">CAPA-PVK-3</shortName>
        </recommendedName>
    </component>
    <component>
        <recommendedName>
            <fullName evidence="7">CAPA-trypto-pyrokinin</fullName>
        </recommendedName>
        <alternativeName>
            <fullName evidence="5">CAPA-tryptoPK</fullName>
        </alternativeName>
    </component>
    <component>
        <recommendedName>
            <fullName evidence="7">CAPA-precursor-related peptide 3</fullName>
            <shortName evidence="5">CAPA-PP-3</shortName>
        </recommendedName>
    </component>
</protein>